<gene>
    <name evidence="1" type="primary">tal</name>
    <name type="ordered locus">TRQ2_0636</name>
</gene>
<evidence type="ECO:0000255" key="1">
    <source>
        <dbReference type="HAMAP-Rule" id="MF_00494"/>
    </source>
</evidence>
<protein>
    <recommendedName>
        <fullName evidence="1">Probable transaldolase</fullName>
        <ecNumber evidence="1">2.2.1.2</ecNumber>
    </recommendedName>
</protein>
<keyword id="KW-0963">Cytoplasm</keyword>
<keyword id="KW-0570">Pentose shunt</keyword>
<keyword id="KW-0704">Schiff base</keyword>
<keyword id="KW-0808">Transferase</keyword>
<dbReference type="EC" id="2.2.1.2" evidence="1"/>
<dbReference type="EMBL" id="CP000969">
    <property type="protein sequence ID" value="ACB08989.1"/>
    <property type="molecule type" value="Genomic_DNA"/>
</dbReference>
<dbReference type="SMR" id="B1L9J1"/>
<dbReference type="KEGG" id="trq:TRQ2_0636"/>
<dbReference type="HOGENOM" id="CLU_079764_0_0_0"/>
<dbReference type="UniPathway" id="UPA00115">
    <property type="reaction ID" value="UER00414"/>
</dbReference>
<dbReference type="Proteomes" id="UP000001687">
    <property type="component" value="Chromosome"/>
</dbReference>
<dbReference type="GO" id="GO:0005737">
    <property type="term" value="C:cytoplasm"/>
    <property type="evidence" value="ECO:0007669"/>
    <property type="project" value="UniProtKB-SubCell"/>
</dbReference>
<dbReference type="GO" id="GO:0016832">
    <property type="term" value="F:aldehyde-lyase activity"/>
    <property type="evidence" value="ECO:0007669"/>
    <property type="project" value="InterPro"/>
</dbReference>
<dbReference type="GO" id="GO:0004801">
    <property type="term" value="F:transaldolase activity"/>
    <property type="evidence" value="ECO:0007669"/>
    <property type="project" value="UniProtKB-UniRule"/>
</dbReference>
<dbReference type="GO" id="GO:0005975">
    <property type="term" value="P:carbohydrate metabolic process"/>
    <property type="evidence" value="ECO:0007669"/>
    <property type="project" value="InterPro"/>
</dbReference>
<dbReference type="GO" id="GO:0006098">
    <property type="term" value="P:pentose-phosphate shunt"/>
    <property type="evidence" value="ECO:0007669"/>
    <property type="project" value="UniProtKB-UniRule"/>
</dbReference>
<dbReference type="CDD" id="cd00956">
    <property type="entry name" value="Transaldolase_FSA"/>
    <property type="match status" value="1"/>
</dbReference>
<dbReference type="FunFam" id="3.20.20.70:FF:000018">
    <property type="entry name" value="Probable transaldolase"/>
    <property type="match status" value="1"/>
</dbReference>
<dbReference type="Gene3D" id="3.20.20.70">
    <property type="entry name" value="Aldolase class I"/>
    <property type="match status" value="1"/>
</dbReference>
<dbReference type="HAMAP" id="MF_00494">
    <property type="entry name" value="Transaldolase_3b"/>
    <property type="match status" value="1"/>
</dbReference>
<dbReference type="InterPro" id="IPR013785">
    <property type="entry name" value="Aldolase_TIM"/>
</dbReference>
<dbReference type="InterPro" id="IPR001585">
    <property type="entry name" value="TAL/FSA"/>
</dbReference>
<dbReference type="InterPro" id="IPR022999">
    <property type="entry name" value="Transaldolase_3B"/>
</dbReference>
<dbReference type="InterPro" id="IPR004731">
    <property type="entry name" value="Transaldolase_3B/F6P_aldolase"/>
</dbReference>
<dbReference type="InterPro" id="IPR018225">
    <property type="entry name" value="Transaldolase_AS"/>
</dbReference>
<dbReference type="InterPro" id="IPR033919">
    <property type="entry name" value="TSA/FSA_arc/bac"/>
</dbReference>
<dbReference type="NCBIfam" id="TIGR00875">
    <property type="entry name" value="fsa_talC_mipB"/>
    <property type="match status" value="1"/>
</dbReference>
<dbReference type="PANTHER" id="PTHR10683:SF40">
    <property type="entry name" value="FRUCTOSE-6-PHOSPHATE ALDOLASE 1-RELATED"/>
    <property type="match status" value="1"/>
</dbReference>
<dbReference type="PANTHER" id="PTHR10683">
    <property type="entry name" value="TRANSALDOLASE"/>
    <property type="match status" value="1"/>
</dbReference>
<dbReference type="Pfam" id="PF00923">
    <property type="entry name" value="TAL_FSA"/>
    <property type="match status" value="1"/>
</dbReference>
<dbReference type="SUPFAM" id="SSF51569">
    <property type="entry name" value="Aldolase"/>
    <property type="match status" value="1"/>
</dbReference>
<dbReference type="PROSITE" id="PS01054">
    <property type="entry name" value="TRANSALDOLASE_1"/>
    <property type="match status" value="1"/>
</dbReference>
<dbReference type="PROSITE" id="PS00958">
    <property type="entry name" value="TRANSALDOLASE_2"/>
    <property type="match status" value="1"/>
</dbReference>
<name>TAL_THESQ</name>
<accession>B1L9J1</accession>
<organism>
    <name type="scientific">Thermotoga sp. (strain RQ2)</name>
    <dbReference type="NCBI Taxonomy" id="126740"/>
    <lineage>
        <taxon>Bacteria</taxon>
        <taxon>Thermotogati</taxon>
        <taxon>Thermotogota</taxon>
        <taxon>Thermotogae</taxon>
        <taxon>Thermotogales</taxon>
        <taxon>Thermotogaceae</taxon>
        <taxon>Thermotoga</taxon>
    </lineage>
</organism>
<feature type="chain" id="PRO_1000126368" description="Probable transaldolase">
    <location>
        <begin position="1"/>
        <end position="218"/>
    </location>
</feature>
<feature type="active site" description="Schiff-base intermediate with substrate" evidence="1">
    <location>
        <position position="83"/>
    </location>
</feature>
<proteinExistence type="inferred from homology"/>
<reference key="1">
    <citation type="journal article" date="2011" name="J. Bacteriol.">
        <title>Genome sequence of Thermotoga sp. strain RQ2, a hyperthermophilic bacterium isolated from a geothermally heated region of the seafloor near Ribeira Quente, the Azores.</title>
        <authorList>
            <person name="Swithers K.S."/>
            <person name="DiPippo J.L."/>
            <person name="Bruce D.C."/>
            <person name="Detter C."/>
            <person name="Tapia R."/>
            <person name="Han S."/>
            <person name="Saunders E."/>
            <person name="Goodwin L.A."/>
            <person name="Han J."/>
            <person name="Woyke T."/>
            <person name="Pitluck S."/>
            <person name="Pennacchio L."/>
            <person name="Nolan M."/>
            <person name="Mikhailova N."/>
            <person name="Lykidis A."/>
            <person name="Land M.L."/>
            <person name="Brettin T."/>
            <person name="Stetter K.O."/>
            <person name="Nelson K.E."/>
            <person name="Gogarten J.P."/>
            <person name="Noll K.M."/>
        </authorList>
    </citation>
    <scope>NUCLEOTIDE SEQUENCE [LARGE SCALE GENOMIC DNA]</scope>
    <source>
        <strain>RQ2</strain>
    </source>
</reference>
<comment type="function">
    <text evidence="1">Transaldolase is important for the balance of metabolites in the pentose-phosphate pathway.</text>
</comment>
<comment type="catalytic activity">
    <reaction evidence="1">
        <text>D-sedoheptulose 7-phosphate + D-glyceraldehyde 3-phosphate = D-erythrose 4-phosphate + beta-D-fructose 6-phosphate</text>
        <dbReference type="Rhea" id="RHEA:17053"/>
        <dbReference type="ChEBI" id="CHEBI:16897"/>
        <dbReference type="ChEBI" id="CHEBI:57483"/>
        <dbReference type="ChEBI" id="CHEBI:57634"/>
        <dbReference type="ChEBI" id="CHEBI:59776"/>
        <dbReference type="EC" id="2.2.1.2"/>
    </reaction>
</comment>
<comment type="pathway">
    <text evidence="1">Carbohydrate degradation; pentose phosphate pathway; D-glyceraldehyde 3-phosphate and beta-D-fructose 6-phosphate from D-ribose 5-phosphate and D-xylulose 5-phosphate (non-oxidative stage): step 2/3.</text>
</comment>
<comment type="subcellular location">
    <subcellularLocation>
        <location evidence="1">Cytoplasm</location>
    </subcellularLocation>
</comment>
<comment type="similarity">
    <text evidence="1">Belongs to the transaldolase family. Type 3B subfamily.</text>
</comment>
<sequence>MKIFLDTANLEEIKKGVEWGIVDGVTTNPTLISKEGAEFKQRVKEICDLVKGPVSAEVVSLDYEGMVREARELAQISEYVVIKIPMTPDGIKAVKTLSAEGIKTNVTLVFSPAQAILAAKAGATYVSPFVGRMDDLSNDGMRMLGEIVEIYNNYGFETEIIAASIRHPMHVVEAALMGVDIVTIPFAVLERLFKHPMTDLGIERFMEDWKKYLENLKK</sequence>